<protein>
    <recommendedName>
        <fullName evidence="2">Ornithine carbamoyltransferase</fullName>
        <shortName evidence="2">OTCase</shortName>
        <ecNumber evidence="2">2.1.3.3</ecNumber>
    </recommendedName>
</protein>
<organism>
    <name type="scientific">Shigella dysenteriae serotype 1 (strain Sd197)</name>
    <dbReference type="NCBI Taxonomy" id="300267"/>
    <lineage>
        <taxon>Bacteria</taxon>
        <taxon>Pseudomonadati</taxon>
        <taxon>Pseudomonadota</taxon>
        <taxon>Gammaproteobacteria</taxon>
        <taxon>Enterobacterales</taxon>
        <taxon>Enterobacteriaceae</taxon>
        <taxon>Shigella</taxon>
    </lineage>
</organism>
<evidence type="ECO:0000250" key="1"/>
<evidence type="ECO:0000255" key="2">
    <source>
        <dbReference type="HAMAP-Rule" id="MF_01109"/>
    </source>
</evidence>
<sequence length="334" mass="36832">MSGFYHKHFLKLLDFTPAELNSLLQLAAKLKADKKSGKEEAKLTGKNIALIFEKDSTRTRCSFEVAAYDQGARVTYLGPSGSQIGHKESIKDTARVLGRMYDGIQYRGYGQEIVETLAEYAGVPVWNGLTNEFHPTQLLADLLTMQEHLPGKAFNEMTLVYAGDARNNMGNSMLEAAALTGLGLRLVAPQACWPEAALVTECRALAQQNGGNITLTEDVAQGVEGADFIYTDVWVSMGEAKEKWAERIALLRDYQVNNKMMQLTGNPEVKFLHCLPAFHDDQTTLGKKMAEEFGLHGGMEVTDEVFESAASIVFDQAENRMHTIKAVMVATLSK</sequence>
<name>OTC_SHIDS</name>
<feature type="chain" id="PRO_1000065118" description="Ornithine carbamoyltransferase">
    <location>
        <begin position="1"/>
        <end position="334"/>
    </location>
</feature>
<feature type="binding site" evidence="2">
    <location>
        <begin position="56"/>
        <end position="59"/>
    </location>
    <ligand>
        <name>carbamoyl phosphate</name>
        <dbReference type="ChEBI" id="CHEBI:58228"/>
    </ligand>
</feature>
<feature type="binding site" evidence="2">
    <location>
        <position position="83"/>
    </location>
    <ligand>
        <name>carbamoyl phosphate</name>
        <dbReference type="ChEBI" id="CHEBI:58228"/>
    </ligand>
</feature>
<feature type="binding site" evidence="2">
    <location>
        <position position="107"/>
    </location>
    <ligand>
        <name>carbamoyl phosphate</name>
        <dbReference type="ChEBI" id="CHEBI:58228"/>
    </ligand>
</feature>
<feature type="binding site" evidence="2">
    <location>
        <begin position="134"/>
        <end position="137"/>
    </location>
    <ligand>
        <name>carbamoyl phosphate</name>
        <dbReference type="ChEBI" id="CHEBI:58228"/>
    </ligand>
</feature>
<feature type="binding site" evidence="2">
    <location>
        <position position="168"/>
    </location>
    <ligand>
        <name>L-ornithine</name>
        <dbReference type="ChEBI" id="CHEBI:46911"/>
    </ligand>
</feature>
<feature type="binding site" evidence="2">
    <location>
        <position position="232"/>
    </location>
    <ligand>
        <name>L-ornithine</name>
        <dbReference type="ChEBI" id="CHEBI:46911"/>
    </ligand>
</feature>
<feature type="binding site" evidence="2">
    <location>
        <begin position="236"/>
        <end position="237"/>
    </location>
    <ligand>
        <name>L-ornithine</name>
        <dbReference type="ChEBI" id="CHEBI:46911"/>
    </ligand>
</feature>
<feature type="binding site" evidence="2">
    <location>
        <begin position="274"/>
        <end position="275"/>
    </location>
    <ligand>
        <name>carbamoyl phosphate</name>
        <dbReference type="ChEBI" id="CHEBI:58228"/>
    </ligand>
</feature>
<feature type="binding site" evidence="2">
    <location>
        <position position="320"/>
    </location>
    <ligand>
        <name>carbamoyl phosphate</name>
        <dbReference type="ChEBI" id="CHEBI:58228"/>
    </ligand>
</feature>
<accession>Q328S8</accession>
<dbReference type="EC" id="2.1.3.3" evidence="2"/>
<dbReference type="EMBL" id="CP000034">
    <property type="protein sequence ID" value="ABB64177.1"/>
    <property type="molecule type" value="Genomic_DNA"/>
</dbReference>
<dbReference type="RefSeq" id="WP_000012924.1">
    <property type="nucleotide sequence ID" value="NC_007606.1"/>
</dbReference>
<dbReference type="RefSeq" id="YP_405668.1">
    <property type="nucleotide sequence ID" value="NC_007606.1"/>
</dbReference>
<dbReference type="SMR" id="Q328S8"/>
<dbReference type="STRING" id="300267.SDY_4276"/>
<dbReference type="EnsemblBacteria" id="ABB64177">
    <property type="protein sequence ID" value="ABB64177"/>
    <property type="gene ID" value="SDY_4276"/>
</dbReference>
<dbReference type="KEGG" id="sdy:SDY_4276"/>
<dbReference type="PATRIC" id="fig|300267.13.peg.5038"/>
<dbReference type="HOGENOM" id="CLU_043846_3_1_6"/>
<dbReference type="UniPathway" id="UPA00068">
    <property type="reaction ID" value="UER00112"/>
</dbReference>
<dbReference type="Proteomes" id="UP000002716">
    <property type="component" value="Chromosome"/>
</dbReference>
<dbReference type="GO" id="GO:0005737">
    <property type="term" value="C:cytoplasm"/>
    <property type="evidence" value="ECO:0007669"/>
    <property type="project" value="UniProtKB-SubCell"/>
</dbReference>
<dbReference type="GO" id="GO:0016597">
    <property type="term" value="F:amino acid binding"/>
    <property type="evidence" value="ECO:0007669"/>
    <property type="project" value="InterPro"/>
</dbReference>
<dbReference type="GO" id="GO:0004585">
    <property type="term" value="F:ornithine carbamoyltransferase activity"/>
    <property type="evidence" value="ECO:0007669"/>
    <property type="project" value="UniProtKB-UniRule"/>
</dbReference>
<dbReference type="GO" id="GO:0042450">
    <property type="term" value="P:arginine biosynthetic process via ornithine"/>
    <property type="evidence" value="ECO:0007669"/>
    <property type="project" value="TreeGrafter"/>
</dbReference>
<dbReference type="GO" id="GO:0019240">
    <property type="term" value="P:citrulline biosynthetic process"/>
    <property type="evidence" value="ECO:0007669"/>
    <property type="project" value="TreeGrafter"/>
</dbReference>
<dbReference type="GO" id="GO:0006526">
    <property type="term" value="P:L-arginine biosynthetic process"/>
    <property type="evidence" value="ECO:0007669"/>
    <property type="project" value="UniProtKB-UniRule"/>
</dbReference>
<dbReference type="FunFam" id="3.40.50.1370:FF:000003">
    <property type="entry name" value="Ornithine carbamoyltransferase"/>
    <property type="match status" value="1"/>
</dbReference>
<dbReference type="FunFam" id="3.40.50.1370:FF:000004">
    <property type="entry name" value="Ornithine carbamoyltransferase"/>
    <property type="match status" value="1"/>
</dbReference>
<dbReference type="Gene3D" id="3.40.50.1370">
    <property type="entry name" value="Aspartate/ornithine carbamoyltransferase"/>
    <property type="match status" value="2"/>
</dbReference>
<dbReference type="HAMAP" id="MF_01109">
    <property type="entry name" value="OTCase"/>
    <property type="match status" value="1"/>
</dbReference>
<dbReference type="InterPro" id="IPR006132">
    <property type="entry name" value="Asp/Orn_carbamoyltranf_P-bd"/>
</dbReference>
<dbReference type="InterPro" id="IPR006130">
    <property type="entry name" value="Asp/Orn_carbamoylTrfase"/>
</dbReference>
<dbReference type="InterPro" id="IPR036901">
    <property type="entry name" value="Asp/Orn_carbamoylTrfase_sf"/>
</dbReference>
<dbReference type="InterPro" id="IPR006131">
    <property type="entry name" value="Asp_carbamoyltransf_Asp/Orn-bd"/>
</dbReference>
<dbReference type="InterPro" id="IPR002292">
    <property type="entry name" value="Orn/put_carbamltrans"/>
</dbReference>
<dbReference type="InterPro" id="IPR024904">
    <property type="entry name" value="OTCase_ArgI"/>
</dbReference>
<dbReference type="NCBIfam" id="TIGR00658">
    <property type="entry name" value="orni_carb_tr"/>
    <property type="match status" value="1"/>
</dbReference>
<dbReference type="NCBIfam" id="NF009213">
    <property type="entry name" value="PRK12562.1"/>
    <property type="match status" value="1"/>
</dbReference>
<dbReference type="PANTHER" id="PTHR45753:SF4">
    <property type="entry name" value="ORNITHINE CARBAMOYLTRANSFERASE SUBUNIT F-RELATED"/>
    <property type="match status" value="1"/>
</dbReference>
<dbReference type="PANTHER" id="PTHR45753">
    <property type="entry name" value="ORNITHINE CARBAMOYLTRANSFERASE, MITOCHONDRIAL"/>
    <property type="match status" value="1"/>
</dbReference>
<dbReference type="Pfam" id="PF00185">
    <property type="entry name" value="OTCace"/>
    <property type="match status" value="1"/>
</dbReference>
<dbReference type="Pfam" id="PF02729">
    <property type="entry name" value="OTCace_N"/>
    <property type="match status" value="1"/>
</dbReference>
<dbReference type="PRINTS" id="PR00100">
    <property type="entry name" value="AOTCASE"/>
</dbReference>
<dbReference type="PRINTS" id="PR00102">
    <property type="entry name" value="OTCASE"/>
</dbReference>
<dbReference type="SUPFAM" id="SSF53671">
    <property type="entry name" value="Aspartate/ornithine carbamoyltransferase"/>
    <property type="match status" value="1"/>
</dbReference>
<dbReference type="PROSITE" id="PS00097">
    <property type="entry name" value="CARBAMOYLTRANSFERASE"/>
    <property type="match status" value="1"/>
</dbReference>
<comment type="function">
    <text evidence="1">Reversibly catalyzes the transfer of the carbamoyl group from carbamoyl phosphate (CP) to the N(epsilon) atom of ornithine (ORN) to produce L-citrulline.</text>
</comment>
<comment type="catalytic activity">
    <reaction evidence="2">
        <text>carbamoyl phosphate + L-ornithine = L-citrulline + phosphate + H(+)</text>
        <dbReference type="Rhea" id="RHEA:19513"/>
        <dbReference type="ChEBI" id="CHEBI:15378"/>
        <dbReference type="ChEBI" id="CHEBI:43474"/>
        <dbReference type="ChEBI" id="CHEBI:46911"/>
        <dbReference type="ChEBI" id="CHEBI:57743"/>
        <dbReference type="ChEBI" id="CHEBI:58228"/>
        <dbReference type="EC" id="2.1.3.3"/>
    </reaction>
</comment>
<comment type="pathway">
    <text evidence="2">Amino-acid biosynthesis; L-arginine biosynthesis; L-arginine from L-ornithine and carbamoyl phosphate: step 1/3.</text>
</comment>
<comment type="subcellular location">
    <subcellularLocation>
        <location evidence="2">Cytoplasm</location>
    </subcellularLocation>
</comment>
<comment type="similarity">
    <text evidence="2">Belongs to the aspartate/ornithine carbamoyltransferase superfamily. OTCase family.</text>
</comment>
<reference key="1">
    <citation type="journal article" date="2005" name="Nucleic Acids Res.">
        <title>Genome dynamics and diversity of Shigella species, the etiologic agents of bacillary dysentery.</title>
        <authorList>
            <person name="Yang F."/>
            <person name="Yang J."/>
            <person name="Zhang X."/>
            <person name="Chen L."/>
            <person name="Jiang Y."/>
            <person name="Yan Y."/>
            <person name="Tang X."/>
            <person name="Wang J."/>
            <person name="Xiong Z."/>
            <person name="Dong J."/>
            <person name="Xue Y."/>
            <person name="Zhu Y."/>
            <person name="Xu X."/>
            <person name="Sun L."/>
            <person name="Chen S."/>
            <person name="Nie H."/>
            <person name="Peng J."/>
            <person name="Xu J."/>
            <person name="Wang Y."/>
            <person name="Yuan Z."/>
            <person name="Wen Y."/>
            <person name="Yao Z."/>
            <person name="Shen Y."/>
            <person name="Qiang B."/>
            <person name="Hou Y."/>
            <person name="Yu J."/>
            <person name="Jin Q."/>
        </authorList>
    </citation>
    <scope>NUCLEOTIDE SEQUENCE [LARGE SCALE GENOMIC DNA]</scope>
    <source>
        <strain>Sd197</strain>
    </source>
</reference>
<gene>
    <name evidence="2" type="primary">argI</name>
    <name type="ordered locus">SDY_4276</name>
</gene>
<proteinExistence type="inferred from homology"/>
<keyword id="KW-0028">Amino-acid biosynthesis</keyword>
<keyword id="KW-0055">Arginine biosynthesis</keyword>
<keyword id="KW-0963">Cytoplasm</keyword>
<keyword id="KW-1185">Reference proteome</keyword>
<keyword id="KW-0808">Transferase</keyword>